<feature type="chain" id="PRO_1000196614" description="5'-nucleotidase SurE">
    <location>
        <begin position="1"/>
        <end position="261"/>
    </location>
</feature>
<feature type="binding site" evidence="1">
    <location>
        <position position="8"/>
    </location>
    <ligand>
        <name>a divalent metal cation</name>
        <dbReference type="ChEBI" id="CHEBI:60240"/>
    </ligand>
</feature>
<feature type="binding site" evidence="1">
    <location>
        <position position="9"/>
    </location>
    <ligand>
        <name>a divalent metal cation</name>
        <dbReference type="ChEBI" id="CHEBI:60240"/>
    </ligand>
</feature>
<feature type="binding site" evidence="1">
    <location>
        <position position="43"/>
    </location>
    <ligand>
        <name>a divalent metal cation</name>
        <dbReference type="ChEBI" id="CHEBI:60240"/>
    </ligand>
</feature>
<feature type="binding site" evidence="1">
    <location>
        <position position="96"/>
    </location>
    <ligand>
        <name>a divalent metal cation</name>
        <dbReference type="ChEBI" id="CHEBI:60240"/>
    </ligand>
</feature>
<comment type="function">
    <text evidence="1">Nucleotidase that shows phosphatase activity on nucleoside 5'-monophosphates.</text>
</comment>
<comment type="catalytic activity">
    <reaction evidence="1">
        <text>a ribonucleoside 5'-phosphate + H2O = a ribonucleoside + phosphate</text>
        <dbReference type="Rhea" id="RHEA:12484"/>
        <dbReference type="ChEBI" id="CHEBI:15377"/>
        <dbReference type="ChEBI" id="CHEBI:18254"/>
        <dbReference type="ChEBI" id="CHEBI:43474"/>
        <dbReference type="ChEBI" id="CHEBI:58043"/>
        <dbReference type="EC" id="3.1.3.5"/>
    </reaction>
</comment>
<comment type="cofactor">
    <cofactor evidence="1">
        <name>a divalent metal cation</name>
        <dbReference type="ChEBI" id="CHEBI:60240"/>
    </cofactor>
    <text evidence="1">Binds 1 divalent metal cation per subunit.</text>
</comment>
<comment type="subcellular location">
    <subcellularLocation>
        <location evidence="1">Cytoplasm</location>
    </subcellularLocation>
</comment>
<comment type="similarity">
    <text evidence="1">Belongs to the SurE nucleotidase family.</text>
</comment>
<proteinExistence type="inferred from homology"/>
<evidence type="ECO:0000255" key="1">
    <source>
        <dbReference type="HAMAP-Rule" id="MF_00060"/>
    </source>
</evidence>
<gene>
    <name evidence="1" type="primary">surE</name>
    <name type="ordered locus">RSKD131_0859</name>
</gene>
<organism>
    <name type="scientific">Cereibacter sphaeroides (strain KD131 / KCTC 12085)</name>
    <name type="common">Rhodobacter sphaeroides</name>
    <dbReference type="NCBI Taxonomy" id="557760"/>
    <lineage>
        <taxon>Bacteria</taxon>
        <taxon>Pseudomonadati</taxon>
        <taxon>Pseudomonadota</taxon>
        <taxon>Alphaproteobacteria</taxon>
        <taxon>Rhodobacterales</taxon>
        <taxon>Paracoccaceae</taxon>
        <taxon>Cereibacter</taxon>
    </lineage>
</organism>
<keyword id="KW-0963">Cytoplasm</keyword>
<keyword id="KW-0378">Hydrolase</keyword>
<keyword id="KW-0479">Metal-binding</keyword>
<keyword id="KW-0547">Nucleotide-binding</keyword>
<protein>
    <recommendedName>
        <fullName evidence="1">5'-nucleotidase SurE</fullName>
        <ecNumber evidence="1">3.1.3.5</ecNumber>
    </recommendedName>
    <alternativeName>
        <fullName evidence="1">Nucleoside 5'-monophosphate phosphohydrolase</fullName>
    </alternativeName>
</protein>
<reference key="1">
    <citation type="journal article" date="2009" name="J. Bacteriol.">
        <title>Complete genome sequence of Rhodobacter sphaeroides KD131.</title>
        <authorList>
            <person name="Lim S.-K."/>
            <person name="Kim S.J."/>
            <person name="Cha S.H."/>
            <person name="Oh Y.-K."/>
            <person name="Rhee H.-J."/>
            <person name="Kim M.-S."/>
            <person name="Lee J.K."/>
        </authorList>
    </citation>
    <scope>NUCLEOTIDE SEQUENCE [LARGE SCALE GENOMIC DNA]</scope>
    <source>
        <strain>KD131 / KCTC 12085</strain>
    </source>
</reference>
<sequence>MRILITNDDGINAPGLEVLEQIALELAGPDGEVWTVAPAFEQSGVSHAISYTHPMMIAKLGPRRYAAEGSPADCVLAALYDVLQGARPDLVLSGVNRGNNSAENVLYSGTVGGALEAALQGLPAIALSQFLGPETEGLADPFECARTHGARIVRLLLERGLWDGEDYRLFYNVNFPPVPAANLRGHRVAAQGFRRDTSFGVEPHMSPSGRRFLWIRGGAQQSPTLPGTDAAVNLEGFVSITPLRADLTAHDRLAELEALIG</sequence>
<dbReference type="EC" id="3.1.3.5" evidence="1"/>
<dbReference type="EMBL" id="CP001150">
    <property type="protein sequence ID" value="ACM00719.1"/>
    <property type="molecule type" value="Genomic_DNA"/>
</dbReference>
<dbReference type="RefSeq" id="WP_002719696.1">
    <property type="nucleotide sequence ID" value="NC_011963.1"/>
</dbReference>
<dbReference type="SMR" id="B9KQZ2"/>
<dbReference type="GeneID" id="67446299"/>
<dbReference type="KEGG" id="rsk:RSKD131_0859"/>
<dbReference type="HOGENOM" id="CLU_045192_1_2_5"/>
<dbReference type="GO" id="GO:0005737">
    <property type="term" value="C:cytoplasm"/>
    <property type="evidence" value="ECO:0007669"/>
    <property type="project" value="UniProtKB-SubCell"/>
</dbReference>
<dbReference type="GO" id="GO:0008254">
    <property type="term" value="F:3'-nucleotidase activity"/>
    <property type="evidence" value="ECO:0007669"/>
    <property type="project" value="TreeGrafter"/>
</dbReference>
<dbReference type="GO" id="GO:0008253">
    <property type="term" value="F:5'-nucleotidase activity"/>
    <property type="evidence" value="ECO:0007669"/>
    <property type="project" value="UniProtKB-UniRule"/>
</dbReference>
<dbReference type="GO" id="GO:0004309">
    <property type="term" value="F:exopolyphosphatase activity"/>
    <property type="evidence" value="ECO:0007669"/>
    <property type="project" value="TreeGrafter"/>
</dbReference>
<dbReference type="GO" id="GO:0046872">
    <property type="term" value="F:metal ion binding"/>
    <property type="evidence" value="ECO:0007669"/>
    <property type="project" value="UniProtKB-UniRule"/>
</dbReference>
<dbReference type="GO" id="GO:0000166">
    <property type="term" value="F:nucleotide binding"/>
    <property type="evidence" value="ECO:0007669"/>
    <property type="project" value="UniProtKB-KW"/>
</dbReference>
<dbReference type="Gene3D" id="3.40.1210.10">
    <property type="entry name" value="Survival protein SurE-like phosphatase/nucleotidase"/>
    <property type="match status" value="1"/>
</dbReference>
<dbReference type="HAMAP" id="MF_00060">
    <property type="entry name" value="SurE"/>
    <property type="match status" value="1"/>
</dbReference>
<dbReference type="InterPro" id="IPR030048">
    <property type="entry name" value="SurE"/>
</dbReference>
<dbReference type="InterPro" id="IPR002828">
    <property type="entry name" value="SurE-like_Pase/nucleotidase"/>
</dbReference>
<dbReference type="InterPro" id="IPR036523">
    <property type="entry name" value="SurE-like_sf"/>
</dbReference>
<dbReference type="NCBIfam" id="NF001490">
    <property type="entry name" value="PRK00346.1-4"/>
    <property type="match status" value="1"/>
</dbReference>
<dbReference type="NCBIfam" id="NF010541">
    <property type="entry name" value="PRK13931.1"/>
    <property type="match status" value="1"/>
</dbReference>
<dbReference type="NCBIfam" id="TIGR00087">
    <property type="entry name" value="surE"/>
    <property type="match status" value="1"/>
</dbReference>
<dbReference type="PANTHER" id="PTHR30457">
    <property type="entry name" value="5'-NUCLEOTIDASE SURE"/>
    <property type="match status" value="1"/>
</dbReference>
<dbReference type="PANTHER" id="PTHR30457:SF12">
    <property type="entry name" value="5'_3'-NUCLEOTIDASE SURE"/>
    <property type="match status" value="1"/>
</dbReference>
<dbReference type="Pfam" id="PF01975">
    <property type="entry name" value="SurE"/>
    <property type="match status" value="1"/>
</dbReference>
<dbReference type="SUPFAM" id="SSF64167">
    <property type="entry name" value="SurE-like"/>
    <property type="match status" value="1"/>
</dbReference>
<accession>B9KQZ2</accession>
<name>SURE_CERSK</name>